<feature type="chain" id="PRO_0000354403" description="Small ribosomal subunit protein uS14c">
    <location>
        <begin position="1"/>
        <end position="100"/>
    </location>
</feature>
<name>RR14_CAPBU</name>
<keyword id="KW-0150">Chloroplast</keyword>
<keyword id="KW-0934">Plastid</keyword>
<keyword id="KW-0687">Ribonucleoprotein</keyword>
<keyword id="KW-0689">Ribosomal protein</keyword>
<keyword id="KW-0694">RNA-binding</keyword>
<keyword id="KW-0699">rRNA-binding</keyword>
<evidence type="ECO:0000255" key="1">
    <source>
        <dbReference type="HAMAP-Rule" id="MF_00537"/>
    </source>
</evidence>
<evidence type="ECO:0000305" key="2"/>
<reference key="1">
    <citation type="submission" date="2007-03" db="EMBL/GenBank/DDBJ databases">
        <title>Sequencing analysis of Capsella bursa-pastoris JO22 chloroplast DNA.</title>
        <authorList>
            <person name="Hosouchi T."/>
            <person name="Tsuruoka H."/>
            <person name="Kotani H."/>
        </authorList>
    </citation>
    <scope>NUCLEOTIDE SEQUENCE [LARGE SCALE GENOMIC DNA]</scope>
</reference>
<organism>
    <name type="scientific">Capsella bursa-pastoris</name>
    <name type="common">Shepherd's purse</name>
    <name type="synonym">Thlaspi bursa-pastoris</name>
    <dbReference type="NCBI Taxonomy" id="3719"/>
    <lineage>
        <taxon>Eukaryota</taxon>
        <taxon>Viridiplantae</taxon>
        <taxon>Streptophyta</taxon>
        <taxon>Embryophyta</taxon>
        <taxon>Tracheophyta</taxon>
        <taxon>Spermatophyta</taxon>
        <taxon>Magnoliopsida</taxon>
        <taxon>eudicotyledons</taxon>
        <taxon>Gunneridae</taxon>
        <taxon>Pentapetalae</taxon>
        <taxon>rosids</taxon>
        <taxon>malvids</taxon>
        <taxon>Brassicales</taxon>
        <taxon>Brassicaceae</taxon>
        <taxon>Camelineae</taxon>
        <taxon>Capsella</taxon>
    </lineage>
</organism>
<geneLocation type="chloroplast"/>
<dbReference type="EMBL" id="AP009371">
    <property type="protein sequence ID" value="BAF50195.1"/>
    <property type="molecule type" value="Genomic_DNA"/>
</dbReference>
<dbReference type="RefSeq" id="YP_001123371.1">
    <property type="nucleotide sequence ID" value="NC_009270.1"/>
</dbReference>
<dbReference type="SMR" id="A4QKJ0"/>
<dbReference type="GeneID" id="4961717"/>
<dbReference type="GO" id="GO:0009507">
    <property type="term" value="C:chloroplast"/>
    <property type="evidence" value="ECO:0007669"/>
    <property type="project" value="UniProtKB-SubCell"/>
</dbReference>
<dbReference type="GO" id="GO:0015935">
    <property type="term" value="C:small ribosomal subunit"/>
    <property type="evidence" value="ECO:0007669"/>
    <property type="project" value="TreeGrafter"/>
</dbReference>
<dbReference type="GO" id="GO:0019843">
    <property type="term" value="F:rRNA binding"/>
    <property type="evidence" value="ECO:0007669"/>
    <property type="project" value="UniProtKB-UniRule"/>
</dbReference>
<dbReference type="GO" id="GO:0003735">
    <property type="term" value="F:structural constituent of ribosome"/>
    <property type="evidence" value="ECO:0007669"/>
    <property type="project" value="InterPro"/>
</dbReference>
<dbReference type="GO" id="GO:0006412">
    <property type="term" value="P:translation"/>
    <property type="evidence" value="ECO:0007669"/>
    <property type="project" value="UniProtKB-UniRule"/>
</dbReference>
<dbReference type="FunFam" id="1.10.287.1480:FF:000001">
    <property type="entry name" value="30S ribosomal protein S14"/>
    <property type="match status" value="1"/>
</dbReference>
<dbReference type="Gene3D" id="1.10.287.1480">
    <property type="match status" value="1"/>
</dbReference>
<dbReference type="HAMAP" id="MF_00537">
    <property type="entry name" value="Ribosomal_uS14_1"/>
    <property type="match status" value="1"/>
</dbReference>
<dbReference type="InterPro" id="IPR001209">
    <property type="entry name" value="Ribosomal_uS14"/>
</dbReference>
<dbReference type="InterPro" id="IPR023036">
    <property type="entry name" value="Ribosomal_uS14_bac/plastid"/>
</dbReference>
<dbReference type="InterPro" id="IPR018271">
    <property type="entry name" value="Ribosomal_uS14_CS"/>
</dbReference>
<dbReference type="NCBIfam" id="NF006477">
    <property type="entry name" value="PRK08881.1"/>
    <property type="match status" value="1"/>
</dbReference>
<dbReference type="PANTHER" id="PTHR19836">
    <property type="entry name" value="30S RIBOSOMAL PROTEIN S14"/>
    <property type="match status" value="1"/>
</dbReference>
<dbReference type="PANTHER" id="PTHR19836:SF19">
    <property type="entry name" value="SMALL RIBOSOMAL SUBUNIT PROTEIN US14M"/>
    <property type="match status" value="1"/>
</dbReference>
<dbReference type="Pfam" id="PF00253">
    <property type="entry name" value="Ribosomal_S14"/>
    <property type="match status" value="1"/>
</dbReference>
<dbReference type="SUPFAM" id="SSF57716">
    <property type="entry name" value="Glucocorticoid receptor-like (DNA-binding domain)"/>
    <property type="match status" value="1"/>
</dbReference>
<dbReference type="PROSITE" id="PS00527">
    <property type="entry name" value="RIBOSOMAL_S14"/>
    <property type="match status" value="1"/>
</dbReference>
<sequence length="100" mass="11744">MAKKSLIYREKKRQKLEKKYHLIRRSSKKEISEIPSLSEKWKIHGKLQSPPRNSAPTRLHRRCFSTGRPRANYRDFGLSGHILREMVQACLLPGATRSSW</sequence>
<proteinExistence type="inferred from homology"/>
<protein>
    <recommendedName>
        <fullName evidence="1">Small ribosomal subunit protein uS14c</fullName>
    </recommendedName>
    <alternativeName>
        <fullName evidence="2">30S ribosomal protein S14, chloroplastic</fullName>
    </alternativeName>
</protein>
<comment type="function">
    <text evidence="1">Binds 16S rRNA, required for the assembly of 30S particles.</text>
</comment>
<comment type="subunit">
    <text evidence="1">Part of the 30S ribosomal subunit.</text>
</comment>
<comment type="subcellular location">
    <subcellularLocation>
        <location>Plastid</location>
        <location>Chloroplast</location>
    </subcellularLocation>
</comment>
<comment type="similarity">
    <text evidence="1">Belongs to the universal ribosomal protein uS14 family.</text>
</comment>
<gene>
    <name evidence="1" type="primary">rps14</name>
</gene>
<accession>A4QKJ0</accession>